<comment type="function">
    <text evidence="1">The RecF protein is involved in DNA metabolism; it is required for DNA replication and normal SOS inducibility. RecF binds preferentially to single-stranded, linear DNA. It also seems to bind ATP.</text>
</comment>
<comment type="subcellular location">
    <subcellularLocation>
        <location evidence="1">Cytoplasm</location>
    </subcellularLocation>
</comment>
<comment type="similarity">
    <text evidence="1">Belongs to the RecF family.</text>
</comment>
<dbReference type="EMBL" id="CP000903">
    <property type="protein sequence ID" value="ABY41273.1"/>
    <property type="molecule type" value="Genomic_DNA"/>
</dbReference>
<dbReference type="RefSeq" id="WP_002034987.1">
    <property type="nucleotide sequence ID" value="NC_010184.1"/>
</dbReference>
<dbReference type="SMR" id="A9VM93"/>
<dbReference type="KEGG" id="bwe:BcerKBAB4_0004"/>
<dbReference type="eggNOG" id="COG1195">
    <property type="taxonomic scope" value="Bacteria"/>
</dbReference>
<dbReference type="HOGENOM" id="CLU_040267_0_1_9"/>
<dbReference type="Proteomes" id="UP000002154">
    <property type="component" value="Chromosome"/>
</dbReference>
<dbReference type="GO" id="GO:0005737">
    <property type="term" value="C:cytoplasm"/>
    <property type="evidence" value="ECO:0007669"/>
    <property type="project" value="UniProtKB-SubCell"/>
</dbReference>
<dbReference type="GO" id="GO:0005524">
    <property type="term" value="F:ATP binding"/>
    <property type="evidence" value="ECO:0007669"/>
    <property type="project" value="UniProtKB-UniRule"/>
</dbReference>
<dbReference type="GO" id="GO:0003697">
    <property type="term" value="F:single-stranded DNA binding"/>
    <property type="evidence" value="ECO:0007669"/>
    <property type="project" value="UniProtKB-UniRule"/>
</dbReference>
<dbReference type="GO" id="GO:0006260">
    <property type="term" value="P:DNA replication"/>
    <property type="evidence" value="ECO:0007669"/>
    <property type="project" value="UniProtKB-UniRule"/>
</dbReference>
<dbReference type="GO" id="GO:0000731">
    <property type="term" value="P:DNA synthesis involved in DNA repair"/>
    <property type="evidence" value="ECO:0007669"/>
    <property type="project" value="TreeGrafter"/>
</dbReference>
<dbReference type="GO" id="GO:0006302">
    <property type="term" value="P:double-strand break repair"/>
    <property type="evidence" value="ECO:0007669"/>
    <property type="project" value="TreeGrafter"/>
</dbReference>
<dbReference type="GO" id="GO:0009432">
    <property type="term" value="P:SOS response"/>
    <property type="evidence" value="ECO:0007669"/>
    <property type="project" value="UniProtKB-UniRule"/>
</dbReference>
<dbReference type="CDD" id="cd03242">
    <property type="entry name" value="ABC_RecF"/>
    <property type="match status" value="1"/>
</dbReference>
<dbReference type="FunFam" id="1.20.1050.90:FF:000002">
    <property type="entry name" value="DNA replication and repair protein RecF"/>
    <property type="match status" value="1"/>
</dbReference>
<dbReference type="FunFam" id="3.40.50.300:FF:000400">
    <property type="entry name" value="DNA replication and repair protein RecF"/>
    <property type="match status" value="1"/>
</dbReference>
<dbReference type="Gene3D" id="3.40.50.300">
    <property type="entry name" value="P-loop containing nucleotide triphosphate hydrolases"/>
    <property type="match status" value="1"/>
</dbReference>
<dbReference type="Gene3D" id="1.20.1050.90">
    <property type="entry name" value="RecF/RecN/SMC, N-terminal domain"/>
    <property type="match status" value="1"/>
</dbReference>
<dbReference type="HAMAP" id="MF_00365">
    <property type="entry name" value="RecF"/>
    <property type="match status" value="1"/>
</dbReference>
<dbReference type="InterPro" id="IPR001238">
    <property type="entry name" value="DNA-binding_RecF"/>
</dbReference>
<dbReference type="InterPro" id="IPR018078">
    <property type="entry name" value="DNA-binding_RecF_CS"/>
</dbReference>
<dbReference type="InterPro" id="IPR027417">
    <property type="entry name" value="P-loop_NTPase"/>
</dbReference>
<dbReference type="InterPro" id="IPR003395">
    <property type="entry name" value="RecF/RecN/SMC_N"/>
</dbReference>
<dbReference type="InterPro" id="IPR042174">
    <property type="entry name" value="RecF_2"/>
</dbReference>
<dbReference type="NCBIfam" id="TIGR00611">
    <property type="entry name" value="recf"/>
    <property type="match status" value="1"/>
</dbReference>
<dbReference type="PANTHER" id="PTHR32182">
    <property type="entry name" value="DNA REPLICATION AND REPAIR PROTEIN RECF"/>
    <property type="match status" value="1"/>
</dbReference>
<dbReference type="PANTHER" id="PTHR32182:SF0">
    <property type="entry name" value="DNA REPLICATION AND REPAIR PROTEIN RECF"/>
    <property type="match status" value="1"/>
</dbReference>
<dbReference type="Pfam" id="PF02463">
    <property type="entry name" value="SMC_N"/>
    <property type="match status" value="1"/>
</dbReference>
<dbReference type="SUPFAM" id="SSF52540">
    <property type="entry name" value="P-loop containing nucleoside triphosphate hydrolases"/>
    <property type="match status" value="1"/>
</dbReference>
<dbReference type="PROSITE" id="PS00617">
    <property type="entry name" value="RECF_1"/>
    <property type="match status" value="1"/>
</dbReference>
<dbReference type="PROSITE" id="PS00618">
    <property type="entry name" value="RECF_2"/>
    <property type="match status" value="1"/>
</dbReference>
<keyword id="KW-0067">ATP-binding</keyword>
<keyword id="KW-0963">Cytoplasm</keyword>
<keyword id="KW-0227">DNA damage</keyword>
<keyword id="KW-0234">DNA repair</keyword>
<keyword id="KW-0235">DNA replication</keyword>
<keyword id="KW-0238">DNA-binding</keyword>
<keyword id="KW-0547">Nucleotide-binding</keyword>
<keyword id="KW-0742">SOS response</keyword>
<sequence length="375" mass="43515">MFITEIQLKNYRNYEHLELSFEDKVNVIIGENAQGKTNLMEAIYVLAMAKSHRTSNDRELIRWDEDYGNIKGRLQRRNSSISLELNISKKGKKAKLNQLEQQKLSQYIGEMNVVMFAPEDLNLVKGSPQVRRRFLDMELGQIAPVYLYELSQYQKVLTQRNHLLKKMQGNSKNEETMLDVFTLQLIEHGAKILRKRFEFLHLLQEWAAPIHRGISRGLEELEIVYKPSVDVSESMDLSKIKEVYYESFQSVKQREIFRGTTLLGPHRDDLQFFVNSKNVQVFGSQGQQRTTALSLKLAEIELIYSEVKEYPILLLDDVLSELDDYRQSHLLNTIQGKVQTFVTTTSVEGIEHETLKEAKTIHVTNGTVDCEIDRK</sequence>
<organism>
    <name type="scientific">Bacillus mycoides (strain KBAB4)</name>
    <name type="common">Bacillus weihenstephanensis</name>
    <dbReference type="NCBI Taxonomy" id="315730"/>
    <lineage>
        <taxon>Bacteria</taxon>
        <taxon>Bacillati</taxon>
        <taxon>Bacillota</taxon>
        <taxon>Bacilli</taxon>
        <taxon>Bacillales</taxon>
        <taxon>Bacillaceae</taxon>
        <taxon>Bacillus</taxon>
        <taxon>Bacillus cereus group</taxon>
    </lineage>
</organism>
<accession>A9VM93</accession>
<proteinExistence type="inferred from homology"/>
<protein>
    <recommendedName>
        <fullName evidence="1">DNA replication and repair protein RecF</fullName>
    </recommendedName>
</protein>
<feature type="chain" id="PRO_1000121090" description="DNA replication and repair protein RecF">
    <location>
        <begin position="1"/>
        <end position="375"/>
    </location>
</feature>
<feature type="binding site" evidence="1">
    <location>
        <begin position="30"/>
        <end position="37"/>
    </location>
    <ligand>
        <name>ATP</name>
        <dbReference type="ChEBI" id="CHEBI:30616"/>
    </ligand>
</feature>
<reference key="1">
    <citation type="journal article" date="2008" name="Chem. Biol. Interact.">
        <title>Extending the Bacillus cereus group genomics to putative food-borne pathogens of different toxicity.</title>
        <authorList>
            <person name="Lapidus A."/>
            <person name="Goltsman E."/>
            <person name="Auger S."/>
            <person name="Galleron N."/>
            <person name="Segurens B."/>
            <person name="Dossat C."/>
            <person name="Land M.L."/>
            <person name="Broussolle V."/>
            <person name="Brillard J."/>
            <person name="Guinebretiere M.-H."/>
            <person name="Sanchis V."/>
            <person name="Nguen-the C."/>
            <person name="Lereclus D."/>
            <person name="Richardson P."/>
            <person name="Wincker P."/>
            <person name="Weissenbach J."/>
            <person name="Ehrlich S.D."/>
            <person name="Sorokin A."/>
        </authorList>
    </citation>
    <scope>NUCLEOTIDE SEQUENCE [LARGE SCALE GENOMIC DNA]</scope>
    <source>
        <strain>KBAB4</strain>
    </source>
</reference>
<name>RECF_BACMK</name>
<evidence type="ECO:0000255" key="1">
    <source>
        <dbReference type="HAMAP-Rule" id="MF_00365"/>
    </source>
</evidence>
<gene>
    <name evidence="1" type="primary">recF</name>
    <name type="ordered locus">BcerKBAB4_0004</name>
</gene>